<gene>
    <name type="ORF">DDB_G0291876</name>
</gene>
<keyword id="KW-1185">Reference proteome</keyword>
<feature type="chain" id="PRO_0000344400" description="Putative uncharacterized protein DDB_G0291876">
    <location>
        <begin position="1"/>
        <end position="39"/>
    </location>
</feature>
<protein>
    <recommendedName>
        <fullName>Putative uncharacterized protein DDB_G0291876</fullName>
    </recommendedName>
</protein>
<reference key="1">
    <citation type="journal article" date="2005" name="Nature">
        <title>The genome of the social amoeba Dictyostelium discoideum.</title>
        <authorList>
            <person name="Eichinger L."/>
            <person name="Pachebat J.A."/>
            <person name="Gloeckner G."/>
            <person name="Rajandream M.A."/>
            <person name="Sucgang R."/>
            <person name="Berriman M."/>
            <person name="Song J."/>
            <person name="Olsen R."/>
            <person name="Szafranski K."/>
            <person name="Xu Q."/>
            <person name="Tunggal B."/>
            <person name="Kummerfeld S."/>
            <person name="Madera M."/>
            <person name="Konfortov B.A."/>
            <person name="Rivero F."/>
            <person name="Bankier A.T."/>
            <person name="Lehmann R."/>
            <person name="Hamlin N."/>
            <person name="Davies R."/>
            <person name="Gaudet P."/>
            <person name="Fey P."/>
            <person name="Pilcher K."/>
            <person name="Chen G."/>
            <person name="Saunders D."/>
            <person name="Sodergren E.J."/>
            <person name="Davis P."/>
            <person name="Kerhornou A."/>
            <person name="Nie X."/>
            <person name="Hall N."/>
            <person name="Anjard C."/>
            <person name="Hemphill L."/>
            <person name="Bason N."/>
            <person name="Farbrother P."/>
            <person name="Desany B."/>
            <person name="Just E."/>
            <person name="Morio T."/>
            <person name="Rost R."/>
            <person name="Churcher C.M."/>
            <person name="Cooper J."/>
            <person name="Haydock S."/>
            <person name="van Driessche N."/>
            <person name="Cronin A."/>
            <person name="Goodhead I."/>
            <person name="Muzny D.M."/>
            <person name="Mourier T."/>
            <person name="Pain A."/>
            <person name="Lu M."/>
            <person name="Harper D."/>
            <person name="Lindsay R."/>
            <person name="Hauser H."/>
            <person name="James K.D."/>
            <person name="Quiles M."/>
            <person name="Madan Babu M."/>
            <person name="Saito T."/>
            <person name="Buchrieser C."/>
            <person name="Wardroper A."/>
            <person name="Felder M."/>
            <person name="Thangavelu M."/>
            <person name="Johnson D."/>
            <person name="Knights A."/>
            <person name="Loulseged H."/>
            <person name="Mungall K.L."/>
            <person name="Oliver K."/>
            <person name="Price C."/>
            <person name="Quail M.A."/>
            <person name="Urushihara H."/>
            <person name="Hernandez J."/>
            <person name="Rabbinowitsch E."/>
            <person name="Steffen D."/>
            <person name="Sanders M."/>
            <person name="Ma J."/>
            <person name="Kohara Y."/>
            <person name="Sharp S."/>
            <person name="Simmonds M.N."/>
            <person name="Spiegler S."/>
            <person name="Tivey A."/>
            <person name="Sugano S."/>
            <person name="White B."/>
            <person name="Walker D."/>
            <person name="Woodward J.R."/>
            <person name="Winckler T."/>
            <person name="Tanaka Y."/>
            <person name="Shaulsky G."/>
            <person name="Schleicher M."/>
            <person name="Weinstock G.M."/>
            <person name="Rosenthal A."/>
            <person name="Cox E.C."/>
            <person name="Chisholm R.L."/>
            <person name="Gibbs R.A."/>
            <person name="Loomis W.F."/>
            <person name="Platzer M."/>
            <person name="Kay R.R."/>
            <person name="Williams J.G."/>
            <person name="Dear P.H."/>
            <person name="Noegel A.A."/>
            <person name="Barrell B.G."/>
            <person name="Kuspa A."/>
        </authorList>
    </citation>
    <scope>NUCLEOTIDE SEQUENCE [LARGE SCALE GENOMIC DNA]</scope>
    <source>
        <strain>AX4</strain>
    </source>
</reference>
<name>Y8105_DICDI</name>
<sequence length="39" mass="4635">MKKQRNPHLISKNYKGIPIGFNLNLNRTAIKRIQDTREK</sequence>
<organism>
    <name type="scientific">Dictyostelium discoideum</name>
    <name type="common">Social amoeba</name>
    <dbReference type="NCBI Taxonomy" id="44689"/>
    <lineage>
        <taxon>Eukaryota</taxon>
        <taxon>Amoebozoa</taxon>
        <taxon>Evosea</taxon>
        <taxon>Eumycetozoa</taxon>
        <taxon>Dictyostelia</taxon>
        <taxon>Dictyosteliales</taxon>
        <taxon>Dictyosteliaceae</taxon>
        <taxon>Dictyostelium</taxon>
    </lineage>
</organism>
<proteinExistence type="predicted"/>
<accession>Q54E17</accession>
<dbReference type="EMBL" id="AAFI02000186">
    <property type="protein sequence ID" value="EAL61468.1"/>
    <property type="molecule type" value="Genomic_DNA"/>
</dbReference>
<dbReference type="RefSeq" id="XP_629879.1">
    <property type="nucleotide sequence ID" value="XM_629877.1"/>
</dbReference>
<dbReference type="PaxDb" id="44689-DDB0184105"/>
<dbReference type="EnsemblProtists" id="EAL61468">
    <property type="protein sequence ID" value="EAL61468"/>
    <property type="gene ID" value="DDB_G0291876"/>
</dbReference>
<dbReference type="GeneID" id="8628378"/>
<dbReference type="KEGG" id="ddi:DDB_G0291876"/>
<dbReference type="HOGENOM" id="CLU_3321090_0_0_1"/>
<dbReference type="InParanoid" id="Q54E17"/>
<dbReference type="PRO" id="PR:Q54E17"/>
<dbReference type="Proteomes" id="UP000002195">
    <property type="component" value="Chromosome 6"/>
</dbReference>